<keyword id="KW-0963">Cytoplasm</keyword>
<keyword id="KW-0251">Elongation factor</keyword>
<keyword id="KW-0648">Protein biosynthesis</keyword>
<organism>
    <name type="scientific">Yersinia pseudotuberculosis serotype IB (strain PB1/+)</name>
    <dbReference type="NCBI Taxonomy" id="502801"/>
    <lineage>
        <taxon>Bacteria</taxon>
        <taxon>Pseudomonadati</taxon>
        <taxon>Pseudomonadota</taxon>
        <taxon>Gammaproteobacteria</taxon>
        <taxon>Enterobacterales</taxon>
        <taxon>Yersiniaceae</taxon>
        <taxon>Yersinia</taxon>
    </lineage>
</organism>
<protein>
    <recommendedName>
        <fullName evidence="1">Elongation factor Ts</fullName>
        <shortName evidence="1">EF-Ts</shortName>
    </recommendedName>
</protein>
<accession>B2JZ33</accession>
<gene>
    <name evidence="1" type="primary">tsf</name>
    <name type="ordered locus">YPTS_3122</name>
</gene>
<proteinExistence type="inferred from homology"/>
<dbReference type="EMBL" id="CP001048">
    <property type="protein sequence ID" value="ACC90077.1"/>
    <property type="molecule type" value="Genomic_DNA"/>
</dbReference>
<dbReference type="RefSeq" id="WP_002212132.1">
    <property type="nucleotide sequence ID" value="NZ_CP009780.1"/>
</dbReference>
<dbReference type="SMR" id="B2JZ33"/>
<dbReference type="GeneID" id="96662369"/>
<dbReference type="KEGG" id="ypb:YPTS_3122"/>
<dbReference type="PATRIC" id="fig|502801.10.peg.2554"/>
<dbReference type="GO" id="GO:0005737">
    <property type="term" value="C:cytoplasm"/>
    <property type="evidence" value="ECO:0007669"/>
    <property type="project" value="UniProtKB-SubCell"/>
</dbReference>
<dbReference type="GO" id="GO:0003746">
    <property type="term" value="F:translation elongation factor activity"/>
    <property type="evidence" value="ECO:0007669"/>
    <property type="project" value="UniProtKB-UniRule"/>
</dbReference>
<dbReference type="CDD" id="cd14275">
    <property type="entry name" value="UBA_EF-Ts"/>
    <property type="match status" value="1"/>
</dbReference>
<dbReference type="FunFam" id="1.10.286.20:FF:000001">
    <property type="entry name" value="Elongation factor Ts"/>
    <property type="match status" value="1"/>
</dbReference>
<dbReference type="FunFam" id="1.10.8.10:FF:000001">
    <property type="entry name" value="Elongation factor Ts"/>
    <property type="match status" value="1"/>
</dbReference>
<dbReference type="FunFam" id="3.30.479.20:FF:000001">
    <property type="entry name" value="Elongation factor Ts"/>
    <property type="match status" value="1"/>
</dbReference>
<dbReference type="Gene3D" id="1.10.286.20">
    <property type="match status" value="1"/>
</dbReference>
<dbReference type="Gene3D" id="1.10.8.10">
    <property type="entry name" value="DNA helicase RuvA subunit, C-terminal domain"/>
    <property type="match status" value="1"/>
</dbReference>
<dbReference type="Gene3D" id="3.30.479.20">
    <property type="entry name" value="Elongation factor Ts, dimerisation domain"/>
    <property type="match status" value="2"/>
</dbReference>
<dbReference type="HAMAP" id="MF_00050">
    <property type="entry name" value="EF_Ts"/>
    <property type="match status" value="1"/>
</dbReference>
<dbReference type="InterPro" id="IPR036402">
    <property type="entry name" value="EF-Ts_dimer_sf"/>
</dbReference>
<dbReference type="InterPro" id="IPR001816">
    <property type="entry name" value="Transl_elong_EFTs/EF1B"/>
</dbReference>
<dbReference type="InterPro" id="IPR014039">
    <property type="entry name" value="Transl_elong_EFTs/EF1B_dimer"/>
</dbReference>
<dbReference type="InterPro" id="IPR018101">
    <property type="entry name" value="Transl_elong_Ts_CS"/>
</dbReference>
<dbReference type="InterPro" id="IPR009060">
    <property type="entry name" value="UBA-like_sf"/>
</dbReference>
<dbReference type="NCBIfam" id="TIGR00116">
    <property type="entry name" value="tsf"/>
    <property type="match status" value="1"/>
</dbReference>
<dbReference type="PANTHER" id="PTHR11741">
    <property type="entry name" value="ELONGATION FACTOR TS"/>
    <property type="match status" value="1"/>
</dbReference>
<dbReference type="PANTHER" id="PTHR11741:SF0">
    <property type="entry name" value="ELONGATION FACTOR TS, MITOCHONDRIAL"/>
    <property type="match status" value="1"/>
</dbReference>
<dbReference type="Pfam" id="PF00889">
    <property type="entry name" value="EF_TS"/>
    <property type="match status" value="1"/>
</dbReference>
<dbReference type="SUPFAM" id="SSF54713">
    <property type="entry name" value="Elongation factor Ts (EF-Ts), dimerisation domain"/>
    <property type="match status" value="2"/>
</dbReference>
<dbReference type="SUPFAM" id="SSF46934">
    <property type="entry name" value="UBA-like"/>
    <property type="match status" value="1"/>
</dbReference>
<dbReference type="PROSITE" id="PS01127">
    <property type="entry name" value="EF_TS_2"/>
    <property type="match status" value="1"/>
</dbReference>
<reference key="1">
    <citation type="submission" date="2008-04" db="EMBL/GenBank/DDBJ databases">
        <title>Complete sequence of Yersinia pseudotuberculosis PB1/+.</title>
        <authorList>
            <person name="Copeland A."/>
            <person name="Lucas S."/>
            <person name="Lapidus A."/>
            <person name="Glavina del Rio T."/>
            <person name="Dalin E."/>
            <person name="Tice H."/>
            <person name="Bruce D."/>
            <person name="Goodwin L."/>
            <person name="Pitluck S."/>
            <person name="Munk A.C."/>
            <person name="Brettin T."/>
            <person name="Detter J.C."/>
            <person name="Han C."/>
            <person name="Tapia R."/>
            <person name="Schmutz J."/>
            <person name="Larimer F."/>
            <person name="Land M."/>
            <person name="Hauser L."/>
            <person name="Challacombe J.F."/>
            <person name="Green L."/>
            <person name="Lindler L.E."/>
            <person name="Nikolich M.P."/>
            <person name="Richardson P."/>
        </authorList>
    </citation>
    <scope>NUCLEOTIDE SEQUENCE [LARGE SCALE GENOMIC DNA]</scope>
    <source>
        <strain>PB1/+</strain>
    </source>
</reference>
<name>EFTS_YERPB</name>
<comment type="function">
    <text evidence="1">Associates with the EF-Tu.GDP complex and induces the exchange of GDP to GTP. It remains bound to the aminoacyl-tRNA.EF-Tu.GTP complex up to the GTP hydrolysis stage on the ribosome.</text>
</comment>
<comment type="subcellular location">
    <subcellularLocation>
        <location evidence="1">Cytoplasm</location>
    </subcellularLocation>
</comment>
<comment type="similarity">
    <text evidence="1">Belongs to the EF-Ts family.</text>
</comment>
<evidence type="ECO:0000255" key="1">
    <source>
        <dbReference type="HAMAP-Rule" id="MF_00050"/>
    </source>
</evidence>
<sequence length="285" mass="30721">MVAITAALVKELRERTAAGMMECKKALVEANGDIELAIDNMRKSGQAKAAKKAGRIAAEGIILAKVSADGKYGVILELNCETDFVAKDAGFKAFGEEVINAALAEKIADIDVLKAKFEEQRANLVAKIGENINIRRVAVLEGDILGTYLHGARIGVMVAATGADEELVKHIAMHIAASKPEYVKPDDVPAEVVAREHQIQLDIAIESGKPREIAEKMVEGRMRKFTGEVSLTGQNFVMDPSKTVGDLLKENNADVVNFIRFEVGEGIEKVETDFAAEVAAMSKQS</sequence>
<feature type="chain" id="PRO_1000189908" description="Elongation factor Ts">
    <location>
        <begin position="1"/>
        <end position="285"/>
    </location>
</feature>
<feature type="region of interest" description="Involved in Mg(2+) ion dislocation from EF-Tu" evidence="1">
    <location>
        <begin position="82"/>
        <end position="85"/>
    </location>
</feature>